<comment type="function">
    <text evidence="1">One of the primary rRNA binding proteins, it binds directly to 16S rRNA where it nucleates assembly of the body of the 30S subunit.</text>
</comment>
<comment type="function">
    <text evidence="1">With S5 and S12 plays an important role in translational accuracy.</text>
</comment>
<comment type="subunit">
    <text evidence="1">Part of the 30S ribosomal subunit. Contacts protein S5. The interaction surface between S4 and S5 is involved in control of translational fidelity.</text>
</comment>
<comment type="similarity">
    <text evidence="1">Belongs to the universal ribosomal protein uS4 family.</text>
</comment>
<gene>
    <name evidence="1" type="primary">rpsD</name>
    <name type="ordered locus">ECIAI39_3791</name>
</gene>
<protein>
    <recommendedName>
        <fullName evidence="1">Small ribosomal subunit protein uS4</fullName>
    </recommendedName>
    <alternativeName>
        <fullName evidence="2">30S ribosomal protein S4</fullName>
    </alternativeName>
</protein>
<evidence type="ECO:0000255" key="1">
    <source>
        <dbReference type="HAMAP-Rule" id="MF_01306"/>
    </source>
</evidence>
<evidence type="ECO:0000305" key="2"/>
<keyword id="KW-0687">Ribonucleoprotein</keyword>
<keyword id="KW-0689">Ribosomal protein</keyword>
<keyword id="KW-0694">RNA-binding</keyword>
<keyword id="KW-0699">rRNA-binding</keyword>
<proteinExistence type="inferred from homology"/>
<organism>
    <name type="scientific">Escherichia coli O7:K1 (strain IAI39 / ExPEC)</name>
    <dbReference type="NCBI Taxonomy" id="585057"/>
    <lineage>
        <taxon>Bacteria</taxon>
        <taxon>Pseudomonadati</taxon>
        <taxon>Pseudomonadota</taxon>
        <taxon>Gammaproteobacteria</taxon>
        <taxon>Enterobacterales</taxon>
        <taxon>Enterobacteriaceae</taxon>
        <taxon>Escherichia</taxon>
    </lineage>
</organism>
<accession>B7NLL6</accession>
<dbReference type="EMBL" id="CU928164">
    <property type="protein sequence ID" value="CAR19905.1"/>
    <property type="molecule type" value="Genomic_DNA"/>
</dbReference>
<dbReference type="RefSeq" id="WP_000135224.1">
    <property type="nucleotide sequence ID" value="NC_011750.1"/>
</dbReference>
<dbReference type="RefSeq" id="YP_002409688.1">
    <property type="nucleotide sequence ID" value="NC_011750.1"/>
</dbReference>
<dbReference type="SMR" id="B7NLL6"/>
<dbReference type="STRING" id="585057.ECIAI39_3791"/>
<dbReference type="GeneID" id="93778691"/>
<dbReference type="KEGG" id="ect:ECIAI39_3791"/>
<dbReference type="PATRIC" id="fig|585057.6.peg.3927"/>
<dbReference type="HOGENOM" id="CLU_092403_0_2_6"/>
<dbReference type="Proteomes" id="UP000000749">
    <property type="component" value="Chromosome"/>
</dbReference>
<dbReference type="GO" id="GO:0015935">
    <property type="term" value="C:small ribosomal subunit"/>
    <property type="evidence" value="ECO:0007669"/>
    <property type="project" value="InterPro"/>
</dbReference>
<dbReference type="GO" id="GO:0019843">
    <property type="term" value="F:rRNA binding"/>
    <property type="evidence" value="ECO:0007669"/>
    <property type="project" value="UniProtKB-UniRule"/>
</dbReference>
<dbReference type="GO" id="GO:0003735">
    <property type="term" value="F:structural constituent of ribosome"/>
    <property type="evidence" value="ECO:0007669"/>
    <property type="project" value="InterPro"/>
</dbReference>
<dbReference type="GO" id="GO:0042274">
    <property type="term" value="P:ribosomal small subunit biogenesis"/>
    <property type="evidence" value="ECO:0007669"/>
    <property type="project" value="TreeGrafter"/>
</dbReference>
<dbReference type="GO" id="GO:0006412">
    <property type="term" value="P:translation"/>
    <property type="evidence" value="ECO:0007669"/>
    <property type="project" value="UniProtKB-UniRule"/>
</dbReference>
<dbReference type="CDD" id="cd00165">
    <property type="entry name" value="S4"/>
    <property type="match status" value="1"/>
</dbReference>
<dbReference type="FunFam" id="1.10.1050.10:FF:000001">
    <property type="entry name" value="30S ribosomal protein S4"/>
    <property type="match status" value="1"/>
</dbReference>
<dbReference type="FunFam" id="3.10.290.10:FF:000001">
    <property type="entry name" value="30S ribosomal protein S4"/>
    <property type="match status" value="1"/>
</dbReference>
<dbReference type="Gene3D" id="1.10.1050.10">
    <property type="entry name" value="Ribosomal Protein S4 Delta 41, Chain A, domain 1"/>
    <property type="match status" value="1"/>
</dbReference>
<dbReference type="Gene3D" id="3.10.290.10">
    <property type="entry name" value="RNA-binding S4 domain"/>
    <property type="match status" value="1"/>
</dbReference>
<dbReference type="HAMAP" id="MF_01306_B">
    <property type="entry name" value="Ribosomal_uS4_B"/>
    <property type="match status" value="1"/>
</dbReference>
<dbReference type="InterPro" id="IPR022801">
    <property type="entry name" value="Ribosomal_uS4"/>
</dbReference>
<dbReference type="InterPro" id="IPR005709">
    <property type="entry name" value="Ribosomal_uS4_bac-type"/>
</dbReference>
<dbReference type="InterPro" id="IPR018079">
    <property type="entry name" value="Ribosomal_uS4_CS"/>
</dbReference>
<dbReference type="InterPro" id="IPR001912">
    <property type="entry name" value="Ribosomal_uS4_N"/>
</dbReference>
<dbReference type="InterPro" id="IPR002942">
    <property type="entry name" value="S4_RNA-bd"/>
</dbReference>
<dbReference type="InterPro" id="IPR036986">
    <property type="entry name" value="S4_RNA-bd_sf"/>
</dbReference>
<dbReference type="NCBIfam" id="NF003717">
    <property type="entry name" value="PRK05327.1"/>
    <property type="match status" value="1"/>
</dbReference>
<dbReference type="NCBIfam" id="TIGR01017">
    <property type="entry name" value="rpsD_bact"/>
    <property type="match status" value="1"/>
</dbReference>
<dbReference type="PANTHER" id="PTHR11831">
    <property type="entry name" value="30S 40S RIBOSOMAL PROTEIN"/>
    <property type="match status" value="1"/>
</dbReference>
<dbReference type="PANTHER" id="PTHR11831:SF4">
    <property type="entry name" value="SMALL RIBOSOMAL SUBUNIT PROTEIN US4M"/>
    <property type="match status" value="1"/>
</dbReference>
<dbReference type="Pfam" id="PF00163">
    <property type="entry name" value="Ribosomal_S4"/>
    <property type="match status" value="1"/>
</dbReference>
<dbReference type="Pfam" id="PF01479">
    <property type="entry name" value="S4"/>
    <property type="match status" value="1"/>
</dbReference>
<dbReference type="SMART" id="SM01390">
    <property type="entry name" value="Ribosomal_S4"/>
    <property type="match status" value="1"/>
</dbReference>
<dbReference type="SMART" id="SM00363">
    <property type="entry name" value="S4"/>
    <property type="match status" value="1"/>
</dbReference>
<dbReference type="SUPFAM" id="SSF55174">
    <property type="entry name" value="Alpha-L RNA-binding motif"/>
    <property type="match status" value="1"/>
</dbReference>
<dbReference type="PROSITE" id="PS00632">
    <property type="entry name" value="RIBOSOMAL_S4"/>
    <property type="match status" value="1"/>
</dbReference>
<dbReference type="PROSITE" id="PS50889">
    <property type="entry name" value="S4"/>
    <property type="match status" value="1"/>
</dbReference>
<sequence>MARYLGPKLKLSRREGTDLFLKSGVRAIDTKCKIEQAPGQHGARKPRLSDYGVQLREKQKVRRIYGVLERQFRNYYKEAARLKGNTGENLLALLEGRLDNVVYRMGFGATRAEARQLVSHKAIMVNGRVVNIASYQVSPNDVVSIREKAKKQSRVKAALELAEQREKPTWLEVDAGKMEGTFKRKPERSDLSADINEHLIVELYSK</sequence>
<reference key="1">
    <citation type="journal article" date="2009" name="PLoS Genet.">
        <title>Organised genome dynamics in the Escherichia coli species results in highly diverse adaptive paths.</title>
        <authorList>
            <person name="Touchon M."/>
            <person name="Hoede C."/>
            <person name="Tenaillon O."/>
            <person name="Barbe V."/>
            <person name="Baeriswyl S."/>
            <person name="Bidet P."/>
            <person name="Bingen E."/>
            <person name="Bonacorsi S."/>
            <person name="Bouchier C."/>
            <person name="Bouvet O."/>
            <person name="Calteau A."/>
            <person name="Chiapello H."/>
            <person name="Clermont O."/>
            <person name="Cruveiller S."/>
            <person name="Danchin A."/>
            <person name="Diard M."/>
            <person name="Dossat C."/>
            <person name="Karoui M.E."/>
            <person name="Frapy E."/>
            <person name="Garry L."/>
            <person name="Ghigo J.M."/>
            <person name="Gilles A.M."/>
            <person name="Johnson J."/>
            <person name="Le Bouguenec C."/>
            <person name="Lescat M."/>
            <person name="Mangenot S."/>
            <person name="Martinez-Jehanne V."/>
            <person name="Matic I."/>
            <person name="Nassif X."/>
            <person name="Oztas S."/>
            <person name="Petit M.A."/>
            <person name="Pichon C."/>
            <person name="Rouy Z."/>
            <person name="Ruf C.S."/>
            <person name="Schneider D."/>
            <person name="Tourret J."/>
            <person name="Vacherie B."/>
            <person name="Vallenet D."/>
            <person name="Medigue C."/>
            <person name="Rocha E.P.C."/>
            <person name="Denamur E."/>
        </authorList>
    </citation>
    <scope>NUCLEOTIDE SEQUENCE [LARGE SCALE GENOMIC DNA]</scope>
    <source>
        <strain>IAI39 / ExPEC</strain>
    </source>
</reference>
<feature type="chain" id="PRO_1000140726" description="Small ribosomal subunit protein uS4">
    <location>
        <begin position="1"/>
        <end position="206"/>
    </location>
</feature>
<feature type="domain" description="S4 RNA-binding" evidence="1">
    <location>
        <begin position="96"/>
        <end position="156"/>
    </location>
</feature>
<name>RS4_ECO7I</name>